<protein>
    <recommendedName>
        <fullName evidence="4">Cell adhesion molecule CEACAM10</fullName>
    </recommendedName>
    <alternativeName>
        <fullName evidence="3">Carcinoembryonic antigen-related cell adhesion molecule 10</fullName>
        <shortName evidence="5">CEA cell adhesion molecule 10</shortName>
        <shortName>CEA-related cell adhesion molecule 10</shortName>
        <shortName evidence="3">Carcinoembryonic antigen 10</shortName>
    </alternativeName>
</protein>
<reference key="1">
    <citation type="journal article" date="1995" name="Eur. J. Biochem.">
        <title>The cea10 gene encodes a secreted member of the murine carcinoembryonic antigen family and is expressed in the placenta, gastrointestinal tract and bone marrow.</title>
        <authorList>
            <person name="Keck U."/>
            <person name="Nedellec P."/>
            <person name="Beauchemin N."/>
            <person name="Thompson J."/>
            <person name="Zimmermann W."/>
        </authorList>
    </citation>
    <scope>NUCLEOTIDE SEQUENCE [MRNA]</scope>
    <source>
        <strain>CD-1</strain>
        <tissue>Colon</tissue>
    </source>
</reference>
<reference key="2">
    <citation type="journal article" date="2005" name="Science">
        <title>The transcriptional landscape of the mammalian genome.</title>
        <authorList>
            <person name="Carninci P."/>
            <person name="Kasukawa T."/>
            <person name="Katayama S."/>
            <person name="Gough J."/>
            <person name="Frith M.C."/>
            <person name="Maeda N."/>
            <person name="Oyama R."/>
            <person name="Ravasi T."/>
            <person name="Lenhard B."/>
            <person name="Wells C."/>
            <person name="Kodzius R."/>
            <person name="Shimokawa K."/>
            <person name="Bajic V.B."/>
            <person name="Brenner S.E."/>
            <person name="Batalov S."/>
            <person name="Forrest A.R."/>
            <person name="Zavolan M."/>
            <person name="Davis M.J."/>
            <person name="Wilming L.G."/>
            <person name="Aidinis V."/>
            <person name="Allen J.E."/>
            <person name="Ambesi-Impiombato A."/>
            <person name="Apweiler R."/>
            <person name="Aturaliya R.N."/>
            <person name="Bailey T.L."/>
            <person name="Bansal M."/>
            <person name="Baxter L."/>
            <person name="Beisel K.W."/>
            <person name="Bersano T."/>
            <person name="Bono H."/>
            <person name="Chalk A.M."/>
            <person name="Chiu K.P."/>
            <person name="Choudhary V."/>
            <person name="Christoffels A."/>
            <person name="Clutterbuck D.R."/>
            <person name="Crowe M.L."/>
            <person name="Dalla E."/>
            <person name="Dalrymple B.P."/>
            <person name="de Bono B."/>
            <person name="Della Gatta G."/>
            <person name="di Bernardo D."/>
            <person name="Down T."/>
            <person name="Engstrom P."/>
            <person name="Fagiolini M."/>
            <person name="Faulkner G."/>
            <person name="Fletcher C.F."/>
            <person name="Fukushima T."/>
            <person name="Furuno M."/>
            <person name="Futaki S."/>
            <person name="Gariboldi M."/>
            <person name="Georgii-Hemming P."/>
            <person name="Gingeras T.R."/>
            <person name="Gojobori T."/>
            <person name="Green R.E."/>
            <person name="Gustincich S."/>
            <person name="Harbers M."/>
            <person name="Hayashi Y."/>
            <person name="Hensch T.K."/>
            <person name="Hirokawa N."/>
            <person name="Hill D."/>
            <person name="Huminiecki L."/>
            <person name="Iacono M."/>
            <person name="Ikeo K."/>
            <person name="Iwama A."/>
            <person name="Ishikawa T."/>
            <person name="Jakt M."/>
            <person name="Kanapin A."/>
            <person name="Katoh M."/>
            <person name="Kawasawa Y."/>
            <person name="Kelso J."/>
            <person name="Kitamura H."/>
            <person name="Kitano H."/>
            <person name="Kollias G."/>
            <person name="Krishnan S.P."/>
            <person name="Kruger A."/>
            <person name="Kummerfeld S.K."/>
            <person name="Kurochkin I.V."/>
            <person name="Lareau L.F."/>
            <person name="Lazarevic D."/>
            <person name="Lipovich L."/>
            <person name="Liu J."/>
            <person name="Liuni S."/>
            <person name="McWilliam S."/>
            <person name="Madan Babu M."/>
            <person name="Madera M."/>
            <person name="Marchionni L."/>
            <person name="Matsuda H."/>
            <person name="Matsuzawa S."/>
            <person name="Miki H."/>
            <person name="Mignone F."/>
            <person name="Miyake S."/>
            <person name="Morris K."/>
            <person name="Mottagui-Tabar S."/>
            <person name="Mulder N."/>
            <person name="Nakano N."/>
            <person name="Nakauchi H."/>
            <person name="Ng P."/>
            <person name="Nilsson R."/>
            <person name="Nishiguchi S."/>
            <person name="Nishikawa S."/>
            <person name="Nori F."/>
            <person name="Ohara O."/>
            <person name="Okazaki Y."/>
            <person name="Orlando V."/>
            <person name="Pang K.C."/>
            <person name="Pavan W.J."/>
            <person name="Pavesi G."/>
            <person name="Pesole G."/>
            <person name="Petrovsky N."/>
            <person name="Piazza S."/>
            <person name="Reed J."/>
            <person name="Reid J.F."/>
            <person name="Ring B.Z."/>
            <person name="Ringwald M."/>
            <person name="Rost B."/>
            <person name="Ruan Y."/>
            <person name="Salzberg S.L."/>
            <person name="Sandelin A."/>
            <person name="Schneider C."/>
            <person name="Schoenbach C."/>
            <person name="Sekiguchi K."/>
            <person name="Semple C.A."/>
            <person name="Seno S."/>
            <person name="Sessa L."/>
            <person name="Sheng Y."/>
            <person name="Shibata Y."/>
            <person name="Shimada H."/>
            <person name="Shimada K."/>
            <person name="Silva D."/>
            <person name="Sinclair B."/>
            <person name="Sperling S."/>
            <person name="Stupka E."/>
            <person name="Sugiura K."/>
            <person name="Sultana R."/>
            <person name="Takenaka Y."/>
            <person name="Taki K."/>
            <person name="Tammoja K."/>
            <person name="Tan S.L."/>
            <person name="Tang S."/>
            <person name="Taylor M.S."/>
            <person name="Tegner J."/>
            <person name="Teichmann S.A."/>
            <person name="Ueda H.R."/>
            <person name="van Nimwegen E."/>
            <person name="Verardo R."/>
            <person name="Wei C.L."/>
            <person name="Yagi K."/>
            <person name="Yamanishi H."/>
            <person name="Zabarovsky E."/>
            <person name="Zhu S."/>
            <person name="Zimmer A."/>
            <person name="Hide W."/>
            <person name="Bult C."/>
            <person name="Grimmond S.M."/>
            <person name="Teasdale R.D."/>
            <person name="Liu E.T."/>
            <person name="Brusic V."/>
            <person name="Quackenbush J."/>
            <person name="Wahlestedt C."/>
            <person name="Mattick J.S."/>
            <person name="Hume D.A."/>
            <person name="Kai C."/>
            <person name="Sasaki D."/>
            <person name="Tomaru Y."/>
            <person name="Fukuda S."/>
            <person name="Kanamori-Katayama M."/>
            <person name="Suzuki M."/>
            <person name="Aoki J."/>
            <person name="Arakawa T."/>
            <person name="Iida J."/>
            <person name="Imamura K."/>
            <person name="Itoh M."/>
            <person name="Kato T."/>
            <person name="Kawaji H."/>
            <person name="Kawagashira N."/>
            <person name="Kawashima T."/>
            <person name="Kojima M."/>
            <person name="Kondo S."/>
            <person name="Konno H."/>
            <person name="Nakano K."/>
            <person name="Ninomiya N."/>
            <person name="Nishio T."/>
            <person name="Okada M."/>
            <person name="Plessy C."/>
            <person name="Shibata K."/>
            <person name="Shiraki T."/>
            <person name="Suzuki S."/>
            <person name="Tagami M."/>
            <person name="Waki K."/>
            <person name="Watahiki A."/>
            <person name="Okamura-Oho Y."/>
            <person name="Suzuki H."/>
            <person name="Kawai J."/>
            <person name="Hayashizaki Y."/>
        </authorList>
    </citation>
    <scope>NUCLEOTIDE SEQUENCE [LARGE SCALE MRNA]</scope>
    <source>
        <strain>C57BL/6J</strain>
        <tissue>Colon</tissue>
    </source>
</reference>
<reference key="3">
    <citation type="journal article" date="2004" name="Genome Res.">
        <title>The status, quality, and expansion of the NIH full-length cDNA project: the Mammalian Gene Collection (MGC).</title>
        <authorList>
            <consortium name="The MGC Project Team"/>
        </authorList>
    </citation>
    <scope>NUCLEOTIDE SEQUENCE [LARGE SCALE MRNA]</scope>
    <source>
        <strain>FVB/N</strain>
        <tissue>Mammary tumor</tissue>
    </source>
</reference>
<reference key="4">
    <citation type="journal article" date="2005" name="Biol. Reprod.">
        <title>Demonstration of a glycoprotein derived from the Ceacam10 gene in mouse seminal vesicle secretions.</title>
        <authorList>
            <person name="Li S.-H."/>
            <person name="Lee R.K.-K."/>
            <person name="Hsiao Y.-L."/>
            <person name="Chen Y.-H."/>
        </authorList>
    </citation>
    <scope>PROTEIN SEQUENCE OF 34-53; 64-68; 99-104; 184-189 AND 235-249</scope>
    <scope>FUNCTION</scope>
    <scope>GLYCOSYLATION AT ASN-44</scope>
    <scope>SUBCELLULAR LOCATION</scope>
    <scope>TISSUE SPECIFICITY</scope>
    <scope>DEVELOPMENTAL STAGE</scope>
    <source>
        <tissue>Seminal vesicle</tissue>
    </source>
</reference>
<comment type="function">
    <text evidence="2">May interact with other CEACAM proteins on the sperm surface.</text>
</comment>
<comment type="subcellular location">
    <subcellularLocation>
        <location evidence="2">Secreted</location>
        <location evidence="2">Extracellular space</location>
    </subcellularLocation>
</comment>
<comment type="tissue specificity">
    <text evidence="2">Abundant in seminal vesicle and traces in epididymis and prostate (at protein level). Highly expressed in seminal vesicle, minor in colon and placenta and, to a lesser extent, in small intestine, caecum, stomach, salivary gland and bone marrow.</text>
</comment>
<comment type="developmental stage">
    <text evidence="2">Present in trace amounts on 5.5 dpc, increased remarkably from 6.5 dpc to a maximum on 9.5 dpc and rapidly declined thereafter to an almost undetectable level until delivery. First appeared at a considerable level in 3-week-old mice. Thereafter, the amount of transcript began increasing rapidly at 4-week-old mice and reached a maximum in 7-week-old mice.</text>
</comment>
<comment type="similarity">
    <text evidence="4">Belongs to the immunoglobulin superfamily. CEA family.</text>
</comment>
<dbReference type="EMBL" id="L38422">
    <property type="protein sequence ID" value="AAB64011.1"/>
    <property type="molecule type" value="mRNA"/>
</dbReference>
<dbReference type="EMBL" id="AK018529">
    <property type="protein sequence ID" value="BAB31256.1"/>
    <property type="molecule type" value="mRNA"/>
</dbReference>
<dbReference type="EMBL" id="BC003346">
    <property type="protein sequence ID" value="AAH03346.1"/>
    <property type="molecule type" value="mRNA"/>
</dbReference>
<dbReference type="CCDS" id="CCDS39833.1"/>
<dbReference type="PIR" id="S69335">
    <property type="entry name" value="S69335"/>
</dbReference>
<dbReference type="RefSeq" id="NP_031701.3">
    <property type="nucleotide sequence ID" value="NM_007675.4"/>
</dbReference>
<dbReference type="SMR" id="Q61400"/>
<dbReference type="FunCoup" id="Q61400">
    <property type="interactions" value="7"/>
</dbReference>
<dbReference type="STRING" id="10090.ENSMUSP00000037036"/>
<dbReference type="GlyCosmos" id="Q61400">
    <property type="glycosylation" value="3 sites, No reported glycans"/>
</dbReference>
<dbReference type="GlyGen" id="Q61400">
    <property type="glycosylation" value="4 sites, 2 N-linked glycans (2 sites)"/>
</dbReference>
<dbReference type="iPTMnet" id="Q61400"/>
<dbReference type="PaxDb" id="10090-ENSMUSP00000037036"/>
<dbReference type="ProteomicsDB" id="281458"/>
<dbReference type="DNASU" id="26366"/>
<dbReference type="GeneID" id="26366"/>
<dbReference type="KEGG" id="mmu:26366"/>
<dbReference type="UCSC" id="uc009fqm.2">
    <property type="organism name" value="mouse"/>
</dbReference>
<dbReference type="AGR" id="MGI:1347248"/>
<dbReference type="CTD" id="26366"/>
<dbReference type="MGI" id="MGI:1347248">
    <property type="gene designation" value="Ceacam10"/>
</dbReference>
<dbReference type="eggNOG" id="ENOG502S42Z">
    <property type="taxonomic scope" value="Eukaryota"/>
</dbReference>
<dbReference type="InParanoid" id="Q61400"/>
<dbReference type="OrthoDB" id="6353782at2759"/>
<dbReference type="PhylomeDB" id="Q61400"/>
<dbReference type="TreeFam" id="TF336859"/>
<dbReference type="BioGRID-ORCS" id="26366">
    <property type="hits" value="2 hits in 75 CRISPR screens"/>
</dbReference>
<dbReference type="ChiTaRS" id="Ceacam10">
    <property type="organism name" value="mouse"/>
</dbReference>
<dbReference type="PRO" id="PR:Q61400"/>
<dbReference type="Proteomes" id="UP000000589">
    <property type="component" value="Unplaced"/>
</dbReference>
<dbReference type="RNAct" id="Q61400">
    <property type="molecule type" value="protein"/>
</dbReference>
<dbReference type="GO" id="GO:0005576">
    <property type="term" value="C:extracellular region"/>
    <property type="evidence" value="ECO:0007669"/>
    <property type="project" value="UniProtKB-SubCell"/>
</dbReference>
<dbReference type="CDD" id="cd05774">
    <property type="entry name" value="IgV_CEACAM_D1"/>
    <property type="match status" value="2"/>
</dbReference>
<dbReference type="FunFam" id="2.60.40.10:FF:000340">
    <property type="entry name" value="Carcinoembryonic antigen-related cell adhesion molecule 1"/>
    <property type="match status" value="2"/>
</dbReference>
<dbReference type="Gene3D" id="2.60.40.10">
    <property type="entry name" value="Immunoglobulins"/>
    <property type="match status" value="2"/>
</dbReference>
<dbReference type="InterPro" id="IPR050831">
    <property type="entry name" value="CEA_cell_adhesion"/>
</dbReference>
<dbReference type="InterPro" id="IPR036179">
    <property type="entry name" value="Ig-like_dom_sf"/>
</dbReference>
<dbReference type="InterPro" id="IPR013783">
    <property type="entry name" value="Ig-like_fold"/>
</dbReference>
<dbReference type="InterPro" id="IPR013106">
    <property type="entry name" value="Ig_V-set"/>
</dbReference>
<dbReference type="PANTHER" id="PTHR44427:SF1">
    <property type="entry name" value="CARCINOEMBRYONIC ANTIGEN-RELATED CELL ADHESION MOLECULE 1"/>
    <property type="match status" value="1"/>
</dbReference>
<dbReference type="PANTHER" id="PTHR44427">
    <property type="entry name" value="CARCINOEMBRYONIC ANTIGEN-RELATED CELL ADHESION MOLECULE 19"/>
    <property type="match status" value="1"/>
</dbReference>
<dbReference type="Pfam" id="PF07686">
    <property type="entry name" value="V-set"/>
    <property type="match status" value="2"/>
</dbReference>
<dbReference type="SUPFAM" id="SSF48726">
    <property type="entry name" value="Immunoglobulin"/>
    <property type="match status" value="2"/>
</dbReference>
<proteinExistence type="evidence at protein level"/>
<gene>
    <name evidence="5" type="primary">Ceacam10</name>
    <name evidence="3" type="synonym">Cea10</name>
</gene>
<name>CEAMA_MOUSE</name>
<evidence type="ECO:0000255" key="1"/>
<evidence type="ECO:0000269" key="2">
    <source>
    </source>
</evidence>
<evidence type="ECO:0000303" key="3">
    <source>
    </source>
</evidence>
<evidence type="ECO:0000305" key="4"/>
<evidence type="ECO:0000312" key="5">
    <source>
        <dbReference type="MGI" id="MGI:1347248"/>
    </source>
</evidence>
<feature type="signal peptide" evidence="2">
    <location>
        <begin position="1"/>
        <end position="33"/>
    </location>
</feature>
<feature type="chain" id="PRO_0000014574" description="Cell adhesion molecule CEACAM10">
    <location>
        <begin position="34"/>
        <end position="265"/>
    </location>
</feature>
<feature type="domain" description="Ig-like V-type 1">
    <location>
        <begin position="35"/>
        <end position="142"/>
    </location>
</feature>
<feature type="domain" description="Ig-like V-type 2">
    <location>
        <begin position="155"/>
        <end position="262"/>
    </location>
</feature>
<feature type="site" description="Not glycosylated">
    <location>
        <position position="104"/>
    </location>
</feature>
<feature type="glycosylation site" description="N-linked (GlcNAc...) asparagine" evidence="2">
    <location>
        <position position="44"/>
    </location>
</feature>
<feature type="glycosylation site" description="N-linked (GlcNAc...) asparagine" evidence="1">
    <location>
        <position position="87"/>
    </location>
</feature>
<feature type="glycosylation site" description="N-linked (GlcNAc...) asparagine" evidence="1">
    <location>
        <position position="224"/>
    </location>
</feature>
<feature type="sequence conflict" description="In Ref. 2; BAB31256." evidence="4" ref="2">
    <original>P</original>
    <variation>R</variation>
    <location>
        <position position="162"/>
    </location>
</feature>
<feature type="sequence conflict" description="In Ref. 3; AAH03346." evidence="4" ref="3">
    <original>A</original>
    <variation>T</variation>
    <location>
        <position position="200"/>
    </location>
</feature>
<accession>Q61400</accession>
<accession>Q99LD6</accession>
<accession>Q9D329</accession>
<keyword id="KW-0903">Direct protein sequencing</keyword>
<keyword id="KW-0325">Glycoprotein</keyword>
<keyword id="KW-0393">Immunoglobulin domain</keyword>
<keyword id="KW-1185">Reference proteome</keyword>
<keyword id="KW-0677">Repeat</keyword>
<keyword id="KW-0964">Secreted</keyword>
<keyword id="KW-0732">Signal</keyword>
<organism>
    <name type="scientific">Mus musculus</name>
    <name type="common">Mouse</name>
    <dbReference type="NCBI Taxonomy" id="10090"/>
    <lineage>
        <taxon>Eukaryota</taxon>
        <taxon>Metazoa</taxon>
        <taxon>Chordata</taxon>
        <taxon>Craniata</taxon>
        <taxon>Vertebrata</taxon>
        <taxon>Euteleostomi</taxon>
        <taxon>Mammalia</taxon>
        <taxon>Eutheria</taxon>
        <taxon>Euarchontoglires</taxon>
        <taxon>Glires</taxon>
        <taxon>Rodentia</taxon>
        <taxon>Myomorpha</taxon>
        <taxon>Muroidea</taxon>
        <taxon>Muridae</taxon>
        <taxon>Murinae</taxon>
        <taxon>Mus</taxon>
        <taxon>Mus</taxon>
    </lineage>
</organism>
<sequence>MELASAHLHKGQVPWVGLLLTASLLTYWSPATTAQVTVEAVPPNVTADNNVLLLVHNLPQTLRVFYWYKGNSGAGHNEIGRFVTSINRSKMGLAHSGRETIYSNGSLFFQSVTKNDEGVYTLYMLDQNFEITPISVRFHVHPSLLPSLSPPTTGQVTVEAVPPNVAEGENVLLLVHNLPRTLRAIYWYRGTTAGERNEIARFITASNKIILGPAHSDREIIYNNGSLFFQGVTKNDEGAYALDMLFQNFDHTLMPVQFNVHAKKQ</sequence>